<proteinExistence type="inferred from homology"/>
<feature type="chain" id="PRO_0000108583" description="Ribosomal RNA small subunit methyltransferase H">
    <location>
        <begin position="1"/>
        <end position="359"/>
    </location>
</feature>
<feature type="region of interest" description="Disordered" evidence="2">
    <location>
        <begin position="339"/>
        <end position="359"/>
    </location>
</feature>
<feature type="compositionally biased region" description="Basic residues" evidence="2">
    <location>
        <begin position="350"/>
        <end position="359"/>
    </location>
</feature>
<feature type="binding site" evidence="1">
    <location>
        <begin position="39"/>
        <end position="41"/>
    </location>
    <ligand>
        <name>S-adenosyl-L-methionine</name>
        <dbReference type="ChEBI" id="CHEBI:59789"/>
    </ligand>
</feature>
<feature type="binding site" evidence="1">
    <location>
        <position position="58"/>
    </location>
    <ligand>
        <name>S-adenosyl-L-methionine</name>
        <dbReference type="ChEBI" id="CHEBI:59789"/>
    </ligand>
</feature>
<feature type="binding site" evidence="1">
    <location>
        <position position="87"/>
    </location>
    <ligand>
        <name>S-adenosyl-L-methionine</name>
        <dbReference type="ChEBI" id="CHEBI:59789"/>
    </ligand>
</feature>
<feature type="binding site" evidence="1">
    <location>
        <position position="108"/>
    </location>
    <ligand>
        <name>S-adenosyl-L-methionine</name>
        <dbReference type="ChEBI" id="CHEBI:59789"/>
    </ligand>
</feature>
<feature type="binding site" evidence="1">
    <location>
        <position position="115"/>
    </location>
    <ligand>
        <name>S-adenosyl-L-methionine</name>
        <dbReference type="ChEBI" id="CHEBI:59789"/>
    </ligand>
</feature>
<keyword id="KW-0963">Cytoplasm</keyword>
<keyword id="KW-0489">Methyltransferase</keyword>
<keyword id="KW-1185">Reference proteome</keyword>
<keyword id="KW-0698">rRNA processing</keyword>
<keyword id="KW-0949">S-adenosyl-L-methionine</keyword>
<keyword id="KW-0808">Transferase</keyword>
<organism>
    <name type="scientific">Bifidobacterium longum (strain NCC 2705)</name>
    <dbReference type="NCBI Taxonomy" id="206672"/>
    <lineage>
        <taxon>Bacteria</taxon>
        <taxon>Bacillati</taxon>
        <taxon>Actinomycetota</taxon>
        <taxon>Actinomycetes</taxon>
        <taxon>Bifidobacteriales</taxon>
        <taxon>Bifidobacteriaceae</taxon>
        <taxon>Bifidobacterium</taxon>
    </lineage>
</organism>
<name>RSMH_BIFLO</name>
<gene>
    <name evidence="1" type="primary">rsmH</name>
    <name type="synonym">mraW</name>
    <name type="ordered locus">BL1316</name>
</gene>
<protein>
    <recommendedName>
        <fullName evidence="1">Ribosomal RNA small subunit methyltransferase H</fullName>
        <ecNumber evidence="1">2.1.1.199</ecNumber>
    </recommendedName>
    <alternativeName>
        <fullName evidence="1">16S rRNA m(4)C1402 methyltransferase</fullName>
    </alternativeName>
    <alternativeName>
        <fullName evidence="1">rRNA (cytosine-N(4)-)-methyltransferase RsmH</fullName>
    </alternativeName>
</protein>
<dbReference type="EC" id="2.1.1.199" evidence="1"/>
<dbReference type="EMBL" id="AE014295">
    <property type="protein sequence ID" value="AAN25116.1"/>
    <property type="molecule type" value="Genomic_DNA"/>
</dbReference>
<dbReference type="RefSeq" id="NP_696480.1">
    <property type="nucleotide sequence ID" value="NC_004307.2"/>
</dbReference>
<dbReference type="RefSeq" id="WP_007052542.1">
    <property type="nucleotide sequence ID" value="NC_004307.2"/>
</dbReference>
<dbReference type="SMR" id="Q8G4R0"/>
<dbReference type="STRING" id="206672.BL1316"/>
<dbReference type="EnsemblBacteria" id="AAN25116">
    <property type="protein sequence ID" value="AAN25116"/>
    <property type="gene ID" value="BL1316"/>
</dbReference>
<dbReference type="GeneID" id="69578500"/>
<dbReference type="KEGG" id="blo:BL1316"/>
<dbReference type="PATRIC" id="fig|206672.9.peg.166"/>
<dbReference type="HOGENOM" id="CLU_038422_0_0_11"/>
<dbReference type="OrthoDB" id="9806637at2"/>
<dbReference type="PhylomeDB" id="Q8G4R0"/>
<dbReference type="Proteomes" id="UP000000439">
    <property type="component" value="Chromosome"/>
</dbReference>
<dbReference type="GO" id="GO:0005737">
    <property type="term" value="C:cytoplasm"/>
    <property type="evidence" value="ECO:0007669"/>
    <property type="project" value="UniProtKB-SubCell"/>
</dbReference>
<dbReference type="GO" id="GO:0071424">
    <property type="term" value="F:rRNA (cytosine-N4-)-methyltransferase activity"/>
    <property type="evidence" value="ECO:0007669"/>
    <property type="project" value="UniProtKB-UniRule"/>
</dbReference>
<dbReference type="GO" id="GO:0070475">
    <property type="term" value="P:rRNA base methylation"/>
    <property type="evidence" value="ECO:0007669"/>
    <property type="project" value="UniProtKB-UniRule"/>
</dbReference>
<dbReference type="CDD" id="cd02440">
    <property type="entry name" value="AdoMet_MTases"/>
    <property type="match status" value="1"/>
</dbReference>
<dbReference type="FunFam" id="1.10.150.170:FF:000001">
    <property type="entry name" value="Ribosomal RNA small subunit methyltransferase H"/>
    <property type="match status" value="1"/>
</dbReference>
<dbReference type="Gene3D" id="1.10.150.170">
    <property type="entry name" value="Putative methyltransferase TM0872, insert domain"/>
    <property type="match status" value="1"/>
</dbReference>
<dbReference type="Gene3D" id="3.40.50.150">
    <property type="entry name" value="Vaccinia Virus protein VP39"/>
    <property type="match status" value="1"/>
</dbReference>
<dbReference type="HAMAP" id="MF_01007">
    <property type="entry name" value="16SrRNA_methyltr_H"/>
    <property type="match status" value="1"/>
</dbReference>
<dbReference type="InterPro" id="IPR002903">
    <property type="entry name" value="RsmH"/>
</dbReference>
<dbReference type="InterPro" id="IPR023397">
    <property type="entry name" value="SAM-dep_MeTrfase_MraW_recog"/>
</dbReference>
<dbReference type="InterPro" id="IPR029063">
    <property type="entry name" value="SAM-dependent_MTases_sf"/>
</dbReference>
<dbReference type="NCBIfam" id="TIGR00006">
    <property type="entry name" value="16S rRNA (cytosine(1402)-N(4))-methyltransferase RsmH"/>
    <property type="match status" value="1"/>
</dbReference>
<dbReference type="PANTHER" id="PTHR11265:SF0">
    <property type="entry name" value="12S RRNA N4-METHYLCYTIDINE METHYLTRANSFERASE"/>
    <property type="match status" value="1"/>
</dbReference>
<dbReference type="PANTHER" id="PTHR11265">
    <property type="entry name" value="S-ADENOSYL-METHYLTRANSFERASE MRAW"/>
    <property type="match status" value="1"/>
</dbReference>
<dbReference type="Pfam" id="PF01795">
    <property type="entry name" value="Methyltransf_5"/>
    <property type="match status" value="1"/>
</dbReference>
<dbReference type="PIRSF" id="PIRSF004486">
    <property type="entry name" value="MraW"/>
    <property type="match status" value="1"/>
</dbReference>
<dbReference type="SUPFAM" id="SSF81799">
    <property type="entry name" value="Putative methyltransferase TM0872, insert domain"/>
    <property type="match status" value="1"/>
</dbReference>
<dbReference type="SUPFAM" id="SSF53335">
    <property type="entry name" value="S-adenosyl-L-methionine-dependent methyltransferases"/>
    <property type="match status" value="1"/>
</dbReference>
<reference key="1">
    <citation type="journal article" date="2002" name="Proc. Natl. Acad. Sci. U.S.A.">
        <title>The genome sequence of Bifidobacterium longum reflects its adaptation to the human gastrointestinal tract.</title>
        <authorList>
            <person name="Schell M.A."/>
            <person name="Karmirantzou M."/>
            <person name="Snel B."/>
            <person name="Vilanova D."/>
            <person name="Berger B."/>
            <person name="Pessi G."/>
            <person name="Zwahlen M.-C."/>
            <person name="Desiere F."/>
            <person name="Bork P."/>
            <person name="Delley M."/>
            <person name="Pridmore R.D."/>
            <person name="Arigoni F."/>
        </authorList>
    </citation>
    <scope>NUCLEOTIDE SEQUENCE [LARGE SCALE GENOMIC DNA]</scope>
    <source>
        <strain>NCC 2705</strain>
    </source>
</reference>
<accession>Q8G4R0</accession>
<comment type="function">
    <text evidence="1">Specifically methylates the N4 position of cytidine in position 1402 (C1402) of 16S rRNA.</text>
</comment>
<comment type="catalytic activity">
    <reaction evidence="1">
        <text>cytidine(1402) in 16S rRNA + S-adenosyl-L-methionine = N(4)-methylcytidine(1402) in 16S rRNA + S-adenosyl-L-homocysteine + H(+)</text>
        <dbReference type="Rhea" id="RHEA:42928"/>
        <dbReference type="Rhea" id="RHEA-COMP:10286"/>
        <dbReference type="Rhea" id="RHEA-COMP:10287"/>
        <dbReference type="ChEBI" id="CHEBI:15378"/>
        <dbReference type="ChEBI" id="CHEBI:57856"/>
        <dbReference type="ChEBI" id="CHEBI:59789"/>
        <dbReference type="ChEBI" id="CHEBI:74506"/>
        <dbReference type="ChEBI" id="CHEBI:82748"/>
        <dbReference type="EC" id="2.1.1.199"/>
    </reaction>
</comment>
<comment type="subcellular location">
    <subcellularLocation>
        <location evidence="1">Cytoplasm</location>
    </subcellularLocation>
</comment>
<comment type="similarity">
    <text evidence="1">Belongs to the methyltransferase superfamily. RsmH family.</text>
</comment>
<sequence>MVDVANIHLPVLLDDCVNLMAPALEHENAIAVDCTLGLAGHSIAFLKAAPQARLIGIDRDSEALGLATERMEREGLADRFIPVHAAFDQLDQVLADQDIERVDAVFMDLGLSSLQIDETDRGFSYSHDAPLDMRMDVSQPLTAERILATYDAAELVRIFKEYGEERFSRQIARAIVARRDKEPFTTTAQLNRLVDEVVPQAHRPAGNPAKRVFQALRIEVNGELDKLASTLPQAANRLHVGGRLVVESYHSLEDKTVKSFMAQGLRVDVPAGLPVIPPDAQPFFTDLTRGAIKADEHEIAANPRSASVRLRAVEVSREIPSRWRKRFTQTAQGLNDVKIQGSASPGRAKNTARIRTRRG</sequence>
<evidence type="ECO:0000255" key="1">
    <source>
        <dbReference type="HAMAP-Rule" id="MF_01007"/>
    </source>
</evidence>
<evidence type="ECO:0000256" key="2">
    <source>
        <dbReference type="SAM" id="MobiDB-lite"/>
    </source>
</evidence>